<proteinExistence type="inferred from homology"/>
<evidence type="ECO:0000255" key="1">
    <source>
        <dbReference type="HAMAP-Rule" id="MF_00008"/>
    </source>
</evidence>
<organism>
    <name type="scientific">Ruthia magnifica subsp. Calyptogena magnifica</name>
    <dbReference type="NCBI Taxonomy" id="413404"/>
    <lineage>
        <taxon>Bacteria</taxon>
        <taxon>Pseudomonadati</taxon>
        <taxon>Pseudomonadota</taxon>
        <taxon>Gammaproteobacteria</taxon>
        <taxon>Candidatus Pseudothioglobaceae</taxon>
        <taxon>Candidatus Ruthturnera</taxon>
    </lineage>
</organism>
<keyword id="KW-0963">Cytoplasm</keyword>
<keyword id="KW-0489">Methyltransferase</keyword>
<keyword id="KW-0545">Nucleotide biosynthesis</keyword>
<keyword id="KW-0808">Transferase</keyword>
<accession>A1AWQ8</accession>
<feature type="chain" id="PRO_1000000664" description="Thymidylate synthase">
    <location>
        <begin position="1"/>
        <end position="264"/>
    </location>
</feature>
<feature type="active site" description="Nucleophile" evidence="1">
    <location>
        <position position="146"/>
    </location>
</feature>
<feature type="binding site" description="in other chain" evidence="1">
    <location>
        <position position="21"/>
    </location>
    <ligand>
        <name>dUMP</name>
        <dbReference type="ChEBI" id="CHEBI:246422"/>
        <note>ligand shared between dimeric partners</note>
    </ligand>
</feature>
<feature type="binding site" evidence="1">
    <location>
        <position position="51"/>
    </location>
    <ligand>
        <name>(6R)-5,10-methylene-5,6,7,8-tetrahydrofolate</name>
        <dbReference type="ChEBI" id="CHEBI:15636"/>
    </ligand>
</feature>
<feature type="binding site" evidence="1">
    <location>
        <begin position="126"/>
        <end position="127"/>
    </location>
    <ligand>
        <name>dUMP</name>
        <dbReference type="ChEBI" id="CHEBI:246422"/>
        <note>ligand shared between dimeric partners</note>
    </ligand>
</feature>
<feature type="binding site" description="in other chain" evidence="1">
    <location>
        <begin position="166"/>
        <end position="169"/>
    </location>
    <ligand>
        <name>dUMP</name>
        <dbReference type="ChEBI" id="CHEBI:246422"/>
        <note>ligand shared between dimeric partners</note>
    </ligand>
</feature>
<feature type="binding site" evidence="1">
    <location>
        <position position="169"/>
    </location>
    <ligand>
        <name>(6R)-5,10-methylene-5,6,7,8-tetrahydrofolate</name>
        <dbReference type="ChEBI" id="CHEBI:15636"/>
    </ligand>
</feature>
<feature type="binding site" description="in other chain" evidence="1">
    <location>
        <position position="177"/>
    </location>
    <ligand>
        <name>dUMP</name>
        <dbReference type="ChEBI" id="CHEBI:246422"/>
        <note>ligand shared between dimeric partners</note>
    </ligand>
</feature>
<feature type="binding site" description="in other chain" evidence="1">
    <location>
        <begin position="207"/>
        <end position="209"/>
    </location>
    <ligand>
        <name>dUMP</name>
        <dbReference type="ChEBI" id="CHEBI:246422"/>
        <note>ligand shared between dimeric partners</note>
    </ligand>
</feature>
<feature type="binding site" evidence="1">
    <location>
        <position position="263"/>
    </location>
    <ligand>
        <name>(6R)-5,10-methylene-5,6,7,8-tetrahydrofolate</name>
        <dbReference type="ChEBI" id="CHEBI:15636"/>
    </ligand>
</feature>
<dbReference type="EC" id="2.1.1.45" evidence="1"/>
<dbReference type="EMBL" id="CP000488">
    <property type="protein sequence ID" value="ABL02365.1"/>
    <property type="molecule type" value="Genomic_DNA"/>
</dbReference>
<dbReference type="RefSeq" id="WP_011737990.1">
    <property type="nucleotide sequence ID" value="NC_008610.1"/>
</dbReference>
<dbReference type="SMR" id="A1AWQ8"/>
<dbReference type="STRING" id="413404.Rmag_0616"/>
<dbReference type="KEGG" id="rma:Rmag_0616"/>
<dbReference type="eggNOG" id="COG0207">
    <property type="taxonomic scope" value="Bacteria"/>
</dbReference>
<dbReference type="HOGENOM" id="CLU_021669_0_0_6"/>
<dbReference type="OrthoDB" id="9774633at2"/>
<dbReference type="UniPathway" id="UPA00575"/>
<dbReference type="Proteomes" id="UP000002587">
    <property type="component" value="Chromosome"/>
</dbReference>
<dbReference type="GO" id="GO:0005829">
    <property type="term" value="C:cytosol"/>
    <property type="evidence" value="ECO:0007669"/>
    <property type="project" value="TreeGrafter"/>
</dbReference>
<dbReference type="GO" id="GO:0004799">
    <property type="term" value="F:thymidylate synthase activity"/>
    <property type="evidence" value="ECO:0007669"/>
    <property type="project" value="UniProtKB-UniRule"/>
</dbReference>
<dbReference type="GO" id="GO:0006231">
    <property type="term" value="P:dTMP biosynthetic process"/>
    <property type="evidence" value="ECO:0007669"/>
    <property type="project" value="UniProtKB-UniRule"/>
</dbReference>
<dbReference type="GO" id="GO:0006235">
    <property type="term" value="P:dTTP biosynthetic process"/>
    <property type="evidence" value="ECO:0007669"/>
    <property type="project" value="UniProtKB-UniRule"/>
</dbReference>
<dbReference type="GO" id="GO:0032259">
    <property type="term" value="P:methylation"/>
    <property type="evidence" value="ECO:0007669"/>
    <property type="project" value="UniProtKB-KW"/>
</dbReference>
<dbReference type="CDD" id="cd00351">
    <property type="entry name" value="TS_Pyrimidine_HMase"/>
    <property type="match status" value="1"/>
</dbReference>
<dbReference type="FunFam" id="3.30.572.10:FF:000001">
    <property type="entry name" value="Thymidylate synthase"/>
    <property type="match status" value="1"/>
</dbReference>
<dbReference type="Gene3D" id="3.30.572.10">
    <property type="entry name" value="Thymidylate synthase/dCMP hydroxymethylase domain"/>
    <property type="match status" value="1"/>
</dbReference>
<dbReference type="HAMAP" id="MF_00008">
    <property type="entry name" value="Thymidy_synth_bact"/>
    <property type="match status" value="1"/>
</dbReference>
<dbReference type="InterPro" id="IPR045097">
    <property type="entry name" value="Thymidate_synth/dCMP_Mease"/>
</dbReference>
<dbReference type="InterPro" id="IPR023451">
    <property type="entry name" value="Thymidate_synth/dCMP_Mease_dom"/>
</dbReference>
<dbReference type="InterPro" id="IPR036926">
    <property type="entry name" value="Thymidate_synth/dCMP_Mease_sf"/>
</dbReference>
<dbReference type="InterPro" id="IPR000398">
    <property type="entry name" value="Thymidylate_synthase"/>
</dbReference>
<dbReference type="InterPro" id="IPR020940">
    <property type="entry name" value="Thymidylate_synthase_AS"/>
</dbReference>
<dbReference type="NCBIfam" id="NF002497">
    <property type="entry name" value="PRK01827.1-3"/>
    <property type="match status" value="1"/>
</dbReference>
<dbReference type="NCBIfam" id="NF002499">
    <property type="entry name" value="PRK01827.1-5"/>
    <property type="match status" value="1"/>
</dbReference>
<dbReference type="NCBIfam" id="TIGR03284">
    <property type="entry name" value="thym_sym"/>
    <property type="match status" value="2"/>
</dbReference>
<dbReference type="PANTHER" id="PTHR11548:SF9">
    <property type="entry name" value="THYMIDYLATE SYNTHASE"/>
    <property type="match status" value="1"/>
</dbReference>
<dbReference type="PANTHER" id="PTHR11548">
    <property type="entry name" value="THYMIDYLATE SYNTHASE 1"/>
    <property type="match status" value="1"/>
</dbReference>
<dbReference type="Pfam" id="PF00303">
    <property type="entry name" value="Thymidylat_synt"/>
    <property type="match status" value="1"/>
</dbReference>
<dbReference type="PRINTS" id="PR00108">
    <property type="entry name" value="THYMDSNTHASE"/>
</dbReference>
<dbReference type="SUPFAM" id="SSF55831">
    <property type="entry name" value="Thymidylate synthase/dCMP hydroxymethylase"/>
    <property type="match status" value="1"/>
</dbReference>
<dbReference type="PROSITE" id="PS00091">
    <property type="entry name" value="THYMIDYLATE_SYNTHASE"/>
    <property type="match status" value="1"/>
</dbReference>
<name>TYSY_RUTMC</name>
<reference key="1">
    <citation type="journal article" date="2007" name="Science">
        <title>The Calyptogena magnifica chemoautotrophic symbiont genome.</title>
        <authorList>
            <person name="Newton I.L.G."/>
            <person name="Woyke T."/>
            <person name="Auchtung T.A."/>
            <person name="Dilly G.F."/>
            <person name="Dutton R.J."/>
            <person name="Fisher M.C."/>
            <person name="Fontanez K.M."/>
            <person name="Lau E."/>
            <person name="Stewart F.J."/>
            <person name="Richardson P.M."/>
            <person name="Barry K.W."/>
            <person name="Saunders E."/>
            <person name="Detter J.C."/>
            <person name="Wu D."/>
            <person name="Eisen J.A."/>
            <person name="Cavanaugh C.M."/>
        </authorList>
    </citation>
    <scope>NUCLEOTIDE SEQUENCE [LARGE SCALE GENOMIC DNA]</scope>
</reference>
<protein>
    <recommendedName>
        <fullName evidence="1">Thymidylate synthase</fullName>
        <shortName evidence="1">TS</shortName>
        <shortName evidence="1">TSase</shortName>
        <ecNumber evidence="1">2.1.1.45</ecNumber>
    </recommendedName>
</protein>
<comment type="function">
    <text evidence="1">Catalyzes the reductive methylation of 2'-deoxyuridine-5'-monophosphate (dUMP) to 2'-deoxythymidine-5'-monophosphate (dTMP) while utilizing 5,10-methylenetetrahydrofolate (mTHF) as the methyl donor and reductant in the reaction, yielding dihydrofolate (DHF) as a by-product. This enzymatic reaction provides an intracellular de novo source of dTMP, an essential precursor for DNA biosynthesis.</text>
</comment>
<comment type="catalytic activity">
    <reaction evidence="1">
        <text>dUMP + (6R)-5,10-methylene-5,6,7,8-tetrahydrofolate = 7,8-dihydrofolate + dTMP</text>
        <dbReference type="Rhea" id="RHEA:12104"/>
        <dbReference type="ChEBI" id="CHEBI:15636"/>
        <dbReference type="ChEBI" id="CHEBI:57451"/>
        <dbReference type="ChEBI" id="CHEBI:63528"/>
        <dbReference type="ChEBI" id="CHEBI:246422"/>
        <dbReference type="EC" id="2.1.1.45"/>
    </reaction>
</comment>
<comment type="pathway">
    <text evidence="1">Pyrimidine metabolism; dTTP biosynthesis.</text>
</comment>
<comment type="subunit">
    <text evidence="1">Homodimer.</text>
</comment>
<comment type="subcellular location">
    <subcellularLocation>
        <location evidence="1">Cytoplasm</location>
    </subcellularLocation>
</comment>
<comment type="similarity">
    <text evidence="1">Belongs to the thymidylate synthase family. Bacterial-type ThyA subfamily.</text>
</comment>
<sequence>MKQYLDFLRLVKNTGTNKTDRTGIGTTSLFGYQMRFDLSDGFPLITTKRVHLPSVVHELLWFLSGATNIKYLQENGVRIWNEWADKNGDLGPIYGVQWRNWQNVRGESIDQIMQVIEQIKNTPDSRRIIVSAWNVGELENMALPPCHAFFQFYVALGKLSCQLYQRSADVFLGVPFNIASYALLTHMMAQQCDLEVGDFIWSGGDCHIYSNHTKQVEIQLARTPKTLATLKINNKPDSIFDYNFEDFEFINYVFDAYIKATVAI</sequence>
<gene>
    <name evidence="1" type="primary">thyA</name>
    <name type="ordered locus">Rmag_0616</name>
</gene>